<organism>
    <name type="scientific">Burkholderia mallei (strain NCTC 10229)</name>
    <dbReference type="NCBI Taxonomy" id="412022"/>
    <lineage>
        <taxon>Bacteria</taxon>
        <taxon>Pseudomonadati</taxon>
        <taxon>Pseudomonadota</taxon>
        <taxon>Betaproteobacteria</taxon>
        <taxon>Burkholderiales</taxon>
        <taxon>Burkholderiaceae</taxon>
        <taxon>Burkholderia</taxon>
        <taxon>pseudomallei group</taxon>
    </lineage>
</organism>
<sequence length="299" mass="32919">MTTVNLAAYRFVSLDSIEQWRPLVAARCNTLGLRGTILLAPEGINLFIAGPREATDAFVDYIRHDPLFEGKFADLPFKESLSDSQPFRRMLVRLKREIITMKKPAIKPELGRAPSVDARTLKAWLDQGHDDAGRPVVMLDTRNAFEVDVGTFDRALDYRIDKFSEFPAVIEANRADLEGKTIVSFCTGGIRCEKAAIHMKDVGIENVYQLEGGILKYFEEVGGAHYHGDCFVFDYRTALNPQLAPTADVTCFACRAVVPADAQQSPLYVPGKCCPACHPGDSGTPGRRAEPGAEPARAV</sequence>
<comment type="function">
    <text evidence="1">Catalyzes oxygen-dependent 5-hydroxyuridine (ho5U) modification at position 34 in tRNAs.</text>
</comment>
<comment type="catalytic activity">
    <reaction evidence="1">
        <text>uridine(34) in tRNA + AH2 + O2 = 5-hydroxyuridine(34) in tRNA + A + H2O</text>
        <dbReference type="Rhea" id="RHEA:64224"/>
        <dbReference type="Rhea" id="RHEA-COMP:11727"/>
        <dbReference type="Rhea" id="RHEA-COMP:13381"/>
        <dbReference type="ChEBI" id="CHEBI:13193"/>
        <dbReference type="ChEBI" id="CHEBI:15377"/>
        <dbReference type="ChEBI" id="CHEBI:15379"/>
        <dbReference type="ChEBI" id="CHEBI:17499"/>
        <dbReference type="ChEBI" id="CHEBI:65315"/>
        <dbReference type="ChEBI" id="CHEBI:136877"/>
    </reaction>
</comment>
<comment type="similarity">
    <text evidence="1">Belongs to the TrhO family.</text>
</comment>
<evidence type="ECO:0000255" key="1">
    <source>
        <dbReference type="HAMAP-Rule" id="MF_00469"/>
    </source>
</evidence>
<name>TRHO_BURM9</name>
<keyword id="KW-0560">Oxidoreductase</keyword>
<keyword id="KW-0819">tRNA processing</keyword>
<dbReference type="EC" id="1.14.-.-" evidence="1"/>
<dbReference type="EMBL" id="CP000546">
    <property type="protein sequence ID" value="ABN02921.1"/>
    <property type="molecule type" value="Genomic_DNA"/>
</dbReference>
<dbReference type="RefSeq" id="WP_004185449.1">
    <property type="nucleotide sequence ID" value="NC_008836.1"/>
</dbReference>
<dbReference type="SMR" id="A2S4E7"/>
<dbReference type="KEGG" id="bml:BMA10229_A0826"/>
<dbReference type="HOGENOM" id="CLU_038878_0_1_4"/>
<dbReference type="Proteomes" id="UP000002283">
    <property type="component" value="Chromosome I"/>
</dbReference>
<dbReference type="GO" id="GO:0016705">
    <property type="term" value="F:oxidoreductase activity, acting on paired donors, with incorporation or reduction of molecular oxygen"/>
    <property type="evidence" value="ECO:0007669"/>
    <property type="project" value="UniProtKB-UniRule"/>
</dbReference>
<dbReference type="GO" id="GO:0006400">
    <property type="term" value="P:tRNA modification"/>
    <property type="evidence" value="ECO:0007669"/>
    <property type="project" value="UniProtKB-UniRule"/>
</dbReference>
<dbReference type="CDD" id="cd01518">
    <property type="entry name" value="RHOD_YceA"/>
    <property type="match status" value="1"/>
</dbReference>
<dbReference type="Gene3D" id="3.30.70.100">
    <property type="match status" value="1"/>
</dbReference>
<dbReference type="Gene3D" id="3.40.250.10">
    <property type="entry name" value="Rhodanese-like domain"/>
    <property type="match status" value="1"/>
</dbReference>
<dbReference type="HAMAP" id="MF_00469">
    <property type="entry name" value="TrhO"/>
    <property type="match status" value="1"/>
</dbReference>
<dbReference type="InterPro" id="IPR001763">
    <property type="entry name" value="Rhodanese-like_dom"/>
</dbReference>
<dbReference type="InterPro" id="IPR036873">
    <property type="entry name" value="Rhodanese-like_dom_sf"/>
</dbReference>
<dbReference type="InterPro" id="IPR020936">
    <property type="entry name" value="TrhO"/>
</dbReference>
<dbReference type="InterPro" id="IPR040503">
    <property type="entry name" value="TRHO_N"/>
</dbReference>
<dbReference type="NCBIfam" id="NF003703">
    <property type="entry name" value="PRK05320.1"/>
    <property type="match status" value="1"/>
</dbReference>
<dbReference type="PANTHER" id="PTHR43268:SF3">
    <property type="entry name" value="RHODANESE-LIKE DOMAIN-CONTAINING PROTEIN 7-RELATED"/>
    <property type="match status" value="1"/>
</dbReference>
<dbReference type="PANTHER" id="PTHR43268">
    <property type="entry name" value="THIOSULFATE SULFURTRANSFERASE/RHODANESE-LIKE DOMAIN-CONTAINING PROTEIN 2"/>
    <property type="match status" value="1"/>
</dbReference>
<dbReference type="Pfam" id="PF00581">
    <property type="entry name" value="Rhodanese"/>
    <property type="match status" value="1"/>
</dbReference>
<dbReference type="Pfam" id="PF17773">
    <property type="entry name" value="UPF0176_N"/>
    <property type="match status" value="1"/>
</dbReference>
<dbReference type="SMART" id="SM00450">
    <property type="entry name" value="RHOD"/>
    <property type="match status" value="1"/>
</dbReference>
<dbReference type="SUPFAM" id="SSF52821">
    <property type="entry name" value="Rhodanese/Cell cycle control phosphatase"/>
    <property type="match status" value="1"/>
</dbReference>
<dbReference type="PROSITE" id="PS50206">
    <property type="entry name" value="RHODANESE_3"/>
    <property type="match status" value="1"/>
</dbReference>
<proteinExistence type="inferred from homology"/>
<accession>A2S4E7</accession>
<feature type="chain" id="PRO_1000013729" description="tRNA uridine(34) hydroxylase">
    <location>
        <begin position="1"/>
        <end position="299"/>
    </location>
</feature>
<feature type="domain" description="Rhodanese" evidence="1">
    <location>
        <begin position="132"/>
        <end position="226"/>
    </location>
</feature>
<feature type="active site" description="Cysteine persulfide intermediate" evidence="1">
    <location>
        <position position="186"/>
    </location>
</feature>
<protein>
    <recommendedName>
        <fullName evidence="1">tRNA uridine(34) hydroxylase</fullName>
        <ecNumber evidence="1">1.14.-.-</ecNumber>
    </recommendedName>
    <alternativeName>
        <fullName evidence="1">tRNA hydroxylation protein O</fullName>
    </alternativeName>
</protein>
<gene>
    <name evidence="1" type="primary">trhO</name>
    <name type="ordered locus">BMA10229_A0826</name>
</gene>
<reference key="1">
    <citation type="journal article" date="2010" name="Genome Biol. Evol.">
        <title>Continuing evolution of Burkholderia mallei through genome reduction and large-scale rearrangements.</title>
        <authorList>
            <person name="Losada L."/>
            <person name="Ronning C.M."/>
            <person name="DeShazer D."/>
            <person name="Woods D."/>
            <person name="Fedorova N."/>
            <person name="Kim H.S."/>
            <person name="Shabalina S.A."/>
            <person name="Pearson T.R."/>
            <person name="Brinkac L."/>
            <person name="Tan P."/>
            <person name="Nandi T."/>
            <person name="Crabtree J."/>
            <person name="Badger J."/>
            <person name="Beckstrom-Sternberg S."/>
            <person name="Saqib M."/>
            <person name="Schutzer S.E."/>
            <person name="Keim P."/>
            <person name="Nierman W.C."/>
        </authorList>
    </citation>
    <scope>NUCLEOTIDE SEQUENCE [LARGE SCALE GENOMIC DNA]</scope>
    <source>
        <strain>NCTC 10229</strain>
    </source>
</reference>